<keyword id="KW-0067">ATP-binding</keyword>
<keyword id="KW-0347">Helicase</keyword>
<keyword id="KW-0378">Hydrolase</keyword>
<keyword id="KW-0547">Nucleotide-binding</keyword>
<keyword id="KW-1185">Reference proteome</keyword>
<reference key="1">
    <citation type="journal article" date="2004" name="Virology">
        <title>Comparative genomic analyses of frog virus 3, type species of the genus Ranavirus (family Iridoviridae).</title>
        <authorList>
            <person name="Tan W.G."/>
            <person name="Barkman T.J."/>
            <person name="Gregory Chinchar V."/>
            <person name="Essani K."/>
        </authorList>
    </citation>
    <scope>NUCLEOTIDE SEQUENCE [LARGE SCALE GENOMIC DNA]</scope>
</reference>
<dbReference type="EC" id="3.6.4.-"/>
<dbReference type="EMBL" id="AY548484">
    <property type="protein sequence ID" value="AAT09714.1"/>
    <property type="molecule type" value="Genomic_DNA"/>
</dbReference>
<dbReference type="RefSeq" id="YP_031633.1">
    <property type="nucleotide sequence ID" value="NC_005946.1"/>
</dbReference>
<dbReference type="KEGG" id="vg:2947754"/>
<dbReference type="Proteomes" id="UP000008770">
    <property type="component" value="Segment"/>
</dbReference>
<dbReference type="GO" id="GO:0005524">
    <property type="term" value="F:ATP binding"/>
    <property type="evidence" value="ECO:0007669"/>
    <property type="project" value="UniProtKB-KW"/>
</dbReference>
<dbReference type="GO" id="GO:0003677">
    <property type="term" value="F:DNA binding"/>
    <property type="evidence" value="ECO:0007669"/>
    <property type="project" value="InterPro"/>
</dbReference>
<dbReference type="GO" id="GO:0004386">
    <property type="term" value="F:helicase activity"/>
    <property type="evidence" value="ECO:0007669"/>
    <property type="project" value="UniProtKB-KW"/>
</dbReference>
<dbReference type="GO" id="GO:0016787">
    <property type="term" value="F:hydrolase activity"/>
    <property type="evidence" value="ECO:0007669"/>
    <property type="project" value="UniProtKB-KW"/>
</dbReference>
<dbReference type="Gene3D" id="3.40.50.300">
    <property type="entry name" value="P-loop containing nucleotide triphosphate hydrolases"/>
    <property type="match status" value="2"/>
</dbReference>
<dbReference type="InterPro" id="IPR006935">
    <property type="entry name" value="Helicase/UvrB_N"/>
</dbReference>
<dbReference type="InterPro" id="IPR014001">
    <property type="entry name" value="Helicase_ATP-bd"/>
</dbReference>
<dbReference type="InterPro" id="IPR050742">
    <property type="entry name" value="Helicase_Restrict-Modif_Enz"/>
</dbReference>
<dbReference type="InterPro" id="IPR027417">
    <property type="entry name" value="P-loop_NTPase"/>
</dbReference>
<dbReference type="PANTHER" id="PTHR47396:SF1">
    <property type="entry name" value="ATP-DEPENDENT HELICASE IRC3-RELATED"/>
    <property type="match status" value="1"/>
</dbReference>
<dbReference type="PANTHER" id="PTHR47396">
    <property type="entry name" value="TYPE I RESTRICTION ENZYME ECOKI R PROTEIN"/>
    <property type="match status" value="1"/>
</dbReference>
<dbReference type="Pfam" id="PF04851">
    <property type="entry name" value="ResIII"/>
    <property type="match status" value="1"/>
</dbReference>
<dbReference type="SMART" id="SM00487">
    <property type="entry name" value="DEXDc"/>
    <property type="match status" value="1"/>
</dbReference>
<dbReference type="SUPFAM" id="SSF52540">
    <property type="entry name" value="P-loop containing nucleoside triphosphate hydrolases"/>
    <property type="match status" value="2"/>
</dbReference>
<dbReference type="PROSITE" id="PS51192">
    <property type="entry name" value="HELICASE_ATP_BIND_1"/>
    <property type="match status" value="1"/>
</dbReference>
<accession>Q6GZS1</accession>
<organism>
    <name type="scientific">Frog virus 3 (isolate Goorha)</name>
    <name type="common">FV-3</name>
    <dbReference type="NCBI Taxonomy" id="654924"/>
    <lineage>
        <taxon>Viruses</taxon>
        <taxon>Varidnaviria</taxon>
        <taxon>Bamfordvirae</taxon>
        <taxon>Nucleocytoviricota</taxon>
        <taxon>Megaviricetes</taxon>
        <taxon>Pimascovirales</taxon>
        <taxon>Iridoviridae</taxon>
        <taxon>Alphairidovirinae</taxon>
        <taxon>Ranavirus</taxon>
        <taxon>Frog virus 3</taxon>
    </lineage>
</organism>
<name>055L_FRG3G</name>
<proteinExistence type="predicted"/>
<evidence type="ECO:0000255" key="1">
    <source>
        <dbReference type="PROSITE-ProRule" id="PRU00541"/>
    </source>
</evidence>
<evidence type="ECO:0000256" key="2">
    <source>
        <dbReference type="SAM" id="MobiDB-lite"/>
    </source>
</evidence>
<organismHost>
    <name type="scientific">Dryophytes versicolor</name>
    <name type="common">chameleon treefrog</name>
    <dbReference type="NCBI Taxonomy" id="30343"/>
</organismHost>
<organismHost>
    <name type="scientific">Lithobates pipiens</name>
    <name type="common">Northern leopard frog</name>
    <name type="synonym">Rana pipiens</name>
    <dbReference type="NCBI Taxonomy" id="8404"/>
</organismHost>
<organismHost>
    <name type="scientific">Lithobates sylvaticus</name>
    <name type="common">Wood frog</name>
    <name type="synonym">Rana sylvatica</name>
    <dbReference type="NCBI Taxonomy" id="45438"/>
</organismHost>
<organismHost>
    <name type="scientific">Notophthalmus viridescens</name>
    <name type="common">Eastern newt</name>
    <name type="synonym">Triturus viridescens</name>
    <dbReference type="NCBI Taxonomy" id="8316"/>
</organismHost>
<sequence>MAKLLRLNAIDGDMPGAGEADLFTLAPGGKAYVPFAWGSRVLGCKPPPAHGAARERGSVSLRPHQKGVLKEAWGHVTSKGYCMLKCPPGFGKTFMALELWRRLGLPALVLTNRRVLATQWRDSATRFLPDSRVFTSGTPPPDALPRDLYVTGPASLRNRRIKAKDSPAKFLLIVDEAHQLTSPVSCRVLLSVRPSHLLGLSATPMRYDDYHAALGAFFGREDSTVDRVDPRPHEVEILSTGVHIEPEFSKITGKMDWNSVIKAQSDNPERDAALADRMLLRPDVKWLVLCKRVDHVKRMAETLSSRSGKKVDVLHGSKDEWDRDAWCVVGTYSKAGTGFDACERTGLCLAADVDRYFEQCLGRLRANGGTVLDPVDDLGVLRKHSKNREAVYIAAGCTIKKTKCDASRPSQSTPTPTGSSQPAPRTRRPQR</sequence>
<feature type="chain" id="PRO_0000410582" description="Putative helicase 055L">
    <location>
        <begin position="1"/>
        <end position="431"/>
    </location>
</feature>
<feature type="domain" description="Helicase ATP-binding" evidence="1">
    <location>
        <begin position="73"/>
        <end position="222"/>
    </location>
</feature>
<feature type="region of interest" description="Disordered" evidence="2">
    <location>
        <begin position="403"/>
        <end position="431"/>
    </location>
</feature>
<feature type="short sequence motif" description="DEAH box">
    <location>
        <begin position="175"/>
        <end position="178"/>
    </location>
</feature>
<feature type="compositionally biased region" description="Low complexity" evidence="2">
    <location>
        <begin position="407"/>
        <end position="424"/>
    </location>
</feature>
<feature type="binding site" evidence="1">
    <location>
        <begin position="86"/>
        <end position="93"/>
    </location>
    <ligand>
        <name>ATP</name>
        <dbReference type="ChEBI" id="CHEBI:30616"/>
    </ligand>
</feature>
<protein>
    <recommendedName>
        <fullName>Putative helicase 055L</fullName>
        <ecNumber>3.6.4.-</ecNumber>
    </recommendedName>
</protein>
<gene>
    <name type="ORF">FV3-055L</name>
</gene>